<comment type="function">
    <text evidence="1">Catalyzes the irreversible NADPH-dependent deamination of GMP to IMP. It functions in the conversion of nucleobase, nucleoside and nucleotide derivatives of G to A nucleotides, and in maintaining the intracellular balance of A and G nucleotides.</text>
</comment>
<comment type="catalytic activity">
    <reaction evidence="1">
        <text>IMP + NH4(+) + NADP(+) = GMP + NADPH + 2 H(+)</text>
        <dbReference type="Rhea" id="RHEA:17185"/>
        <dbReference type="ChEBI" id="CHEBI:15378"/>
        <dbReference type="ChEBI" id="CHEBI:28938"/>
        <dbReference type="ChEBI" id="CHEBI:57783"/>
        <dbReference type="ChEBI" id="CHEBI:58053"/>
        <dbReference type="ChEBI" id="CHEBI:58115"/>
        <dbReference type="ChEBI" id="CHEBI:58349"/>
        <dbReference type="EC" id="1.7.1.7"/>
    </reaction>
</comment>
<comment type="subunit">
    <text evidence="1">Homotetramer.</text>
</comment>
<comment type="similarity">
    <text evidence="1">Belongs to the IMPDH/GMPR family. GuaC type 1 subfamily.</text>
</comment>
<reference key="1">
    <citation type="journal article" date="2008" name="PLoS ONE">
        <title>A recalibrated molecular clock and independent origins for the cholera pandemic clones.</title>
        <authorList>
            <person name="Feng L."/>
            <person name="Reeves P.R."/>
            <person name="Lan R."/>
            <person name="Ren Y."/>
            <person name="Gao C."/>
            <person name="Zhou Z."/>
            <person name="Ren Y."/>
            <person name="Cheng J."/>
            <person name="Wang W."/>
            <person name="Wang J."/>
            <person name="Qian W."/>
            <person name="Li D."/>
            <person name="Wang L."/>
        </authorList>
    </citation>
    <scope>NUCLEOTIDE SEQUENCE [LARGE SCALE GENOMIC DNA]</scope>
    <source>
        <strain>M66-2</strain>
    </source>
</reference>
<evidence type="ECO:0000255" key="1">
    <source>
        <dbReference type="HAMAP-Rule" id="MF_00596"/>
    </source>
</evidence>
<accession>C3LUL9</accession>
<proteinExistence type="inferred from homology"/>
<gene>
    <name evidence="1" type="primary">guaC</name>
    <name type="ordered locus">VCM66_A0193</name>
</gene>
<dbReference type="EC" id="1.7.1.7" evidence="1"/>
<dbReference type="EMBL" id="CP001234">
    <property type="protein sequence ID" value="ACP07174.1"/>
    <property type="molecule type" value="Genomic_DNA"/>
</dbReference>
<dbReference type="RefSeq" id="WP_001217709.1">
    <property type="nucleotide sequence ID" value="NC_012580.1"/>
</dbReference>
<dbReference type="SMR" id="C3LUL9"/>
<dbReference type="KEGG" id="vcm:VCM66_A0193"/>
<dbReference type="HOGENOM" id="CLU_022552_5_3_6"/>
<dbReference type="Proteomes" id="UP000001217">
    <property type="component" value="Chromosome II"/>
</dbReference>
<dbReference type="GO" id="GO:0005829">
    <property type="term" value="C:cytosol"/>
    <property type="evidence" value="ECO:0007669"/>
    <property type="project" value="TreeGrafter"/>
</dbReference>
<dbReference type="GO" id="GO:1902560">
    <property type="term" value="C:GMP reductase complex"/>
    <property type="evidence" value="ECO:0007669"/>
    <property type="project" value="InterPro"/>
</dbReference>
<dbReference type="GO" id="GO:0003920">
    <property type="term" value="F:GMP reductase activity"/>
    <property type="evidence" value="ECO:0007669"/>
    <property type="project" value="UniProtKB-UniRule"/>
</dbReference>
<dbReference type="GO" id="GO:0046872">
    <property type="term" value="F:metal ion binding"/>
    <property type="evidence" value="ECO:0007669"/>
    <property type="project" value="UniProtKB-KW"/>
</dbReference>
<dbReference type="GO" id="GO:0006163">
    <property type="term" value="P:purine nucleotide metabolic process"/>
    <property type="evidence" value="ECO:0007669"/>
    <property type="project" value="UniProtKB-UniRule"/>
</dbReference>
<dbReference type="CDD" id="cd00381">
    <property type="entry name" value="IMPDH"/>
    <property type="match status" value="1"/>
</dbReference>
<dbReference type="FunFam" id="3.20.20.70:FF:000012">
    <property type="entry name" value="GMP reductase"/>
    <property type="match status" value="1"/>
</dbReference>
<dbReference type="Gene3D" id="3.20.20.70">
    <property type="entry name" value="Aldolase class I"/>
    <property type="match status" value="1"/>
</dbReference>
<dbReference type="HAMAP" id="MF_00596">
    <property type="entry name" value="GMP_reduct_type1"/>
    <property type="match status" value="1"/>
</dbReference>
<dbReference type="InterPro" id="IPR013785">
    <property type="entry name" value="Aldolase_TIM"/>
</dbReference>
<dbReference type="InterPro" id="IPR050139">
    <property type="entry name" value="GMP_reductase"/>
</dbReference>
<dbReference type="InterPro" id="IPR005993">
    <property type="entry name" value="GMPR"/>
</dbReference>
<dbReference type="InterPro" id="IPR015875">
    <property type="entry name" value="IMP_DH/GMP_Rdtase_CS"/>
</dbReference>
<dbReference type="InterPro" id="IPR001093">
    <property type="entry name" value="IMP_DH_GMPRt"/>
</dbReference>
<dbReference type="NCBIfam" id="TIGR01305">
    <property type="entry name" value="GMP_reduct_1"/>
    <property type="match status" value="1"/>
</dbReference>
<dbReference type="NCBIfam" id="NF003470">
    <property type="entry name" value="PRK05096.1"/>
    <property type="match status" value="1"/>
</dbReference>
<dbReference type="PANTHER" id="PTHR43170">
    <property type="entry name" value="GMP REDUCTASE"/>
    <property type="match status" value="1"/>
</dbReference>
<dbReference type="PANTHER" id="PTHR43170:SF5">
    <property type="entry name" value="GMP REDUCTASE"/>
    <property type="match status" value="1"/>
</dbReference>
<dbReference type="Pfam" id="PF00478">
    <property type="entry name" value="IMPDH"/>
    <property type="match status" value="1"/>
</dbReference>
<dbReference type="PIRSF" id="PIRSF000235">
    <property type="entry name" value="GMP_reductase"/>
    <property type="match status" value="1"/>
</dbReference>
<dbReference type="SMART" id="SM01240">
    <property type="entry name" value="IMPDH"/>
    <property type="match status" value="1"/>
</dbReference>
<dbReference type="SUPFAM" id="SSF51412">
    <property type="entry name" value="Inosine monophosphate dehydrogenase (IMPDH)"/>
    <property type="match status" value="1"/>
</dbReference>
<dbReference type="PROSITE" id="PS00487">
    <property type="entry name" value="IMP_DH_GMP_RED"/>
    <property type="match status" value="1"/>
</dbReference>
<protein>
    <recommendedName>
        <fullName evidence="1">GMP reductase</fullName>
        <ecNumber evidence="1">1.7.1.7</ecNumber>
    </recommendedName>
    <alternativeName>
        <fullName evidence="1">Guanosine 5'-monophosphate oxidoreductase</fullName>
        <shortName evidence="1">Guanosine monophosphate reductase</shortName>
    </alternativeName>
</protein>
<sequence length="347" mass="37114">MRIEQELKLGFKDVLFRPKRSTLKSRSQVNLTREFTFKHSGRQWSGVPVIAANMDSVGSFAMAKALAEHGVMTAVHKHYTVADWAEFVKSADKATLNNVMVSTGTSEADFQKTKDVMALSDELIFICIDIANGYSEHLVEYVQRVRAAFPDKVISAGNVVTGDMVEELILAGADIVKVGIGPGSVCTTRVKTGVGYPQLSAIIECADAAHGLGGRIIGDGGCTCPGDVAKAFGGGADFVMLGGMLAGHEEAGGELIVKDGETFMKFYGMSSKSAMDKHSGGVAGYRAAEGKTVLLPYRGSVHGTIQDILGGVRSTCTYVGAAELRELTKRTTFIRVQEQENNVYGRE</sequence>
<name>GUAC_VIBCM</name>
<feature type="chain" id="PRO_1000146989" description="GMP reductase">
    <location>
        <begin position="1"/>
        <end position="347"/>
    </location>
</feature>
<feature type="active site" description="Thioimidate intermediate" evidence="1">
    <location>
        <position position="186"/>
    </location>
</feature>
<feature type="binding site" evidence="1">
    <location>
        <begin position="108"/>
        <end position="131"/>
    </location>
    <ligand>
        <name>NADP(+)</name>
        <dbReference type="ChEBI" id="CHEBI:58349"/>
    </ligand>
</feature>
<feature type="binding site" evidence="1">
    <location>
        <position position="181"/>
    </location>
    <ligand>
        <name>K(+)</name>
        <dbReference type="ChEBI" id="CHEBI:29103"/>
    </ligand>
</feature>
<feature type="binding site" evidence="1">
    <location>
        <position position="183"/>
    </location>
    <ligand>
        <name>K(+)</name>
        <dbReference type="ChEBI" id="CHEBI:29103"/>
    </ligand>
</feature>
<feature type="binding site" evidence="1">
    <location>
        <begin position="216"/>
        <end position="239"/>
    </location>
    <ligand>
        <name>NADP(+)</name>
        <dbReference type="ChEBI" id="CHEBI:58349"/>
    </ligand>
</feature>
<organism>
    <name type="scientific">Vibrio cholerae serotype O1 (strain M66-2)</name>
    <dbReference type="NCBI Taxonomy" id="579112"/>
    <lineage>
        <taxon>Bacteria</taxon>
        <taxon>Pseudomonadati</taxon>
        <taxon>Pseudomonadota</taxon>
        <taxon>Gammaproteobacteria</taxon>
        <taxon>Vibrionales</taxon>
        <taxon>Vibrionaceae</taxon>
        <taxon>Vibrio</taxon>
    </lineage>
</organism>
<keyword id="KW-0479">Metal-binding</keyword>
<keyword id="KW-0521">NADP</keyword>
<keyword id="KW-0560">Oxidoreductase</keyword>
<keyword id="KW-0630">Potassium</keyword>